<organism>
    <name type="scientific">Bacillus licheniformis (strain ATCC 14580 / DSM 13 / JCM 2505 / CCUG 7422 / NBRC 12200 / NCIMB 9375 / NCTC 10341 / NRRL NRS-1264 / Gibson 46)</name>
    <dbReference type="NCBI Taxonomy" id="279010"/>
    <lineage>
        <taxon>Bacteria</taxon>
        <taxon>Bacillati</taxon>
        <taxon>Bacillota</taxon>
        <taxon>Bacilli</taxon>
        <taxon>Bacillales</taxon>
        <taxon>Bacillaceae</taxon>
        <taxon>Bacillus</taxon>
    </lineage>
</organism>
<name>NADA_BACLD</name>
<reference key="1">
    <citation type="journal article" date="2004" name="J. Mol. Microbiol. Biotechnol.">
        <title>The complete genome sequence of Bacillus licheniformis DSM13, an organism with great industrial potential.</title>
        <authorList>
            <person name="Veith B."/>
            <person name="Herzberg C."/>
            <person name="Steckel S."/>
            <person name="Feesche J."/>
            <person name="Maurer K.H."/>
            <person name="Ehrenreich P."/>
            <person name="Baeumer S."/>
            <person name="Henne A."/>
            <person name="Liesegang H."/>
            <person name="Merkl R."/>
            <person name="Ehrenreich A."/>
            <person name="Gottschalk G."/>
        </authorList>
    </citation>
    <scope>NUCLEOTIDE SEQUENCE [LARGE SCALE GENOMIC DNA]</scope>
    <source>
        <strain>ATCC 14580 / DSM 13 / JCM 2505 / CCUG 7422 / NBRC 12200 / NCIMB 9375 / NCTC 10341 / NRRL NRS-1264 / Gibson 46</strain>
    </source>
</reference>
<reference key="2">
    <citation type="journal article" date="2004" name="Genome Biol.">
        <title>Complete genome sequence of the industrial bacterium Bacillus licheniformis and comparisons with closely related Bacillus species.</title>
        <authorList>
            <person name="Rey M.W."/>
            <person name="Ramaiya P."/>
            <person name="Nelson B.A."/>
            <person name="Brody-Karpin S.D."/>
            <person name="Zaretsky E.J."/>
            <person name="Tang M."/>
            <person name="Lopez de Leon A."/>
            <person name="Xiang H."/>
            <person name="Gusti V."/>
            <person name="Clausen I.G."/>
            <person name="Olsen P.B."/>
            <person name="Rasmussen M.D."/>
            <person name="Andersen J.T."/>
            <person name="Joergensen P.L."/>
            <person name="Larsen T.S."/>
            <person name="Sorokin A."/>
            <person name="Bolotin A."/>
            <person name="Lapidus A."/>
            <person name="Galleron N."/>
            <person name="Ehrlich S.D."/>
            <person name="Berka R.M."/>
        </authorList>
    </citation>
    <scope>NUCLEOTIDE SEQUENCE [LARGE SCALE GENOMIC DNA]</scope>
    <source>
        <strain>ATCC 14580 / DSM 13 / JCM 2505 / CCUG 7422 / NBRC 12200 / NCIMB 9375 / NCTC 10341 / NRRL NRS-1264 / Gibson 46</strain>
    </source>
</reference>
<protein>
    <recommendedName>
        <fullName evidence="1">Quinolinate synthase</fullName>
        <ecNumber evidence="1">2.5.1.72</ecNumber>
    </recommendedName>
</protein>
<gene>
    <name evidence="1" type="primary">nadA</name>
    <name type="ordered locus">BLi02912</name>
    <name type="ordered locus">BL01153</name>
</gene>
<feature type="chain" id="PRO_1000024989" description="Quinolinate synthase">
    <location>
        <begin position="1"/>
        <end position="369"/>
    </location>
</feature>
<feature type="binding site" evidence="1">
    <location>
        <position position="47"/>
    </location>
    <ligand>
        <name>iminosuccinate</name>
        <dbReference type="ChEBI" id="CHEBI:77875"/>
    </ligand>
</feature>
<feature type="binding site" evidence="1">
    <location>
        <position position="64"/>
    </location>
    <ligand>
        <name>iminosuccinate</name>
        <dbReference type="ChEBI" id="CHEBI:77875"/>
    </ligand>
</feature>
<feature type="binding site" evidence="1">
    <location>
        <position position="111"/>
    </location>
    <ligand>
        <name>[4Fe-4S] cluster</name>
        <dbReference type="ChEBI" id="CHEBI:49883"/>
    </ligand>
</feature>
<feature type="binding site" evidence="1">
    <location>
        <begin position="142"/>
        <end position="144"/>
    </location>
    <ligand>
        <name>iminosuccinate</name>
        <dbReference type="ChEBI" id="CHEBI:77875"/>
    </ligand>
</feature>
<feature type="binding site" evidence="1">
    <location>
        <position position="163"/>
    </location>
    <ligand>
        <name>iminosuccinate</name>
        <dbReference type="ChEBI" id="CHEBI:77875"/>
    </ligand>
</feature>
<feature type="binding site" evidence="1">
    <location>
        <position position="231"/>
    </location>
    <ligand>
        <name>[4Fe-4S] cluster</name>
        <dbReference type="ChEBI" id="CHEBI:49883"/>
    </ligand>
</feature>
<feature type="binding site" evidence="1">
    <location>
        <begin position="257"/>
        <end position="259"/>
    </location>
    <ligand>
        <name>iminosuccinate</name>
        <dbReference type="ChEBI" id="CHEBI:77875"/>
    </ligand>
</feature>
<feature type="binding site" evidence="1">
    <location>
        <position position="274"/>
    </location>
    <ligand>
        <name>iminosuccinate</name>
        <dbReference type="ChEBI" id="CHEBI:77875"/>
    </ligand>
</feature>
<feature type="binding site" evidence="1">
    <location>
        <position position="321"/>
    </location>
    <ligand>
        <name>[4Fe-4S] cluster</name>
        <dbReference type="ChEBI" id="CHEBI:49883"/>
    </ligand>
</feature>
<keyword id="KW-0004">4Fe-4S</keyword>
<keyword id="KW-0963">Cytoplasm</keyword>
<keyword id="KW-0408">Iron</keyword>
<keyword id="KW-0411">Iron-sulfur</keyword>
<keyword id="KW-0479">Metal-binding</keyword>
<keyword id="KW-0662">Pyridine nucleotide biosynthesis</keyword>
<keyword id="KW-1185">Reference proteome</keyword>
<keyword id="KW-0808">Transferase</keyword>
<comment type="function">
    <text evidence="1">Catalyzes the condensation of iminoaspartate with dihydroxyacetone phosphate to form quinolinate.</text>
</comment>
<comment type="catalytic activity">
    <reaction evidence="1">
        <text>iminosuccinate + dihydroxyacetone phosphate = quinolinate + phosphate + 2 H2O + H(+)</text>
        <dbReference type="Rhea" id="RHEA:25888"/>
        <dbReference type="ChEBI" id="CHEBI:15377"/>
        <dbReference type="ChEBI" id="CHEBI:15378"/>
        <dbReference type="ChEBI" id="CHEBI:29959"/>
        <dbReference type="ChEBI" id="CHEBI:43474"/>
        <dbReference type="ChEBI" id="CHEBI:57642"/>
        <dbReference type="ChEBI" id="CHEBI:77875"/>
        <dbReference type="EC" id="2.5.1.72"/>
    </reaction>
    <physiologicalReaction direction="left-to-right" evidence="1">
        <dbReference type="Rhea" id="RHEA:25889"/>
    </physiologicalReaction>
</comment>
<comment type="cofactor">
    <cofactor evidence="1">
        <name>[4Fe-4S] cluster</name>
        <dbReference type="ChEBI" id="CHEBI:49883"/>
    </cofactor>
    <text evidence="1">Binds 1 [4Fe-4S] cluster per subunit.</text>
</comment>
<comment type="pathway">
    <text evidence="1">Cofactor biosynthesis; NAD(+) biosynthesis; quinolinate from iminoaspartate: step 1/1.</text>
</comment>
<comment type="subcellular location">
    <subcellularLocation>
        <location evidence="1">Cytoplasm</location>
    </subcellularLocation>
</comment>
<comment type="similarity">
    <text evidence="1">Belongs to the quinolinate synthase family. Type 3 subfamily.</text>
</comment>
<sequence>MSILKVIHDRNAGMMPEVYKELTEEEMAGRILKIKKKFGARLFIPGHHYQKDEVIQFADATGDSLQLAQVAQKNKKAEYIVFCGVHFMAETADMLTSDEQIVVLPDMRAGCSMADMANMRQTNRAWEELTKLFGDTVIPLTYVNSTAEIKAFVGRNGGASVTSSNAARMLTWALSQKERILFLPDQHLGRNTAFDLGIPLSRMAVWDPIAEKLEYNGDMKDIIIILWKGHCSVHEKFTVANIKSVKERDPDINVIVHPECTHEVVALSDFSGSTKKIIDSINEAKPGSKWAIGTEMNLVSRIIQEHPDKQIESLNPDMCPCLTMNRIDMPHLLWSLEQIDKGEPTGVIKVDQDIAKDAILALNRMLTIR</sequence>
<dbReference type="EC" id="2.5.1.72" evidence="1"/>
<dbReference type="EMBL" id="CP000002">
    <property type="protein sequence ID" value="AAU24418.1"/>
    <property type="molecule type" value="Genomic_DNA"/>
</dbReference>
<dbReference type="EMBL" id="AE017333">
    <property type="protein sequence ID" value="AAU41780.1"/>
    <property type="molecule type" value="Genomic_DNA"/>
</dbReference>
<dbReference type="RefSeq" id="WP_003184007.1">
    <property type="nucleotide sequence ID" value="NC_006322.1"/>
</dbReference>
<dbReference type="SMR" id="Q65GN4"/>
<dbReference type="STRING" id="279010.BL01153"/>
<dbReference type="GeneID" id="92860494"/>
<dbReference type="KEGG" id="bld:BLi02912"/>
<dbReference type="KEGG" id="bli:BL01153"/>
<dbReference type="PATRIC" id="fig|279010.13.peg.2971"/>
<dbReference type="eggNOG" id="COG0379">
    <property type="taxonomic scope" value="Bacteria"/>
</dbReference>
<dbReference type="HOGENOM" id="CLU_047382_2_0_9"/>
<dbReference type="UniPathway" id="UPA00253">
    <property type="reaction ID" value="UER00327"/>
</dbReference>
<dbReference type="Proteomes" id="UP000000606">
    <property type="component" value="Chromosome"/>
</dbReference>
<dbReference type="Bgee" id="BL01153">
    <property type="expression patterns" value="Expressed in blastula and 12 other cell types or tissues"/>
</dbReference>
<dbReference type="GO" id="GO:0005829">
    <property type="term" value="C:cytosol"/>
    <property type="evidence" value="ECO:0007669"/>
    <property type="project" value="TreeGrafter"/>
</dbReference>
<dbReference type="GO" id="GO:0051539">
    <property type="term" value="F:4 iron, 4 sulfur cluster binding"/>
    <property type="evidence" value="ECO:0007669"/>
    <property type="project" value="UniProtKB-KW"/>
</dbReference>
<dbReference type="GO" id="GO:0046872">
    <property type="term" value="F:metal ion binding"/>
    <property type="evidence" value="ECO:0007669"/>
    <property type="project" value="UniProtKB-KW"/>
</dbReference>
<dbReference type="GO" id="GO:0008987">
    <property type="term" value="F:quinolinate synthetase A activity"/>
    <property type="evidence" value="ECO:0007669"/>
    <property type="project" value="UniProtKB-UniRule"/>
</dbReference>
<dbReference type="GO" id="GO:0034628">
    <property type="term" value="P:'de novo' NAD biosynthetic process from L-aspartate"/>
    <property type="evidence" value="ECO:0007669"/>
    <property type="project" value="TreeGrafter"/>
</dbReference>
<dbReference type="FunFam" id="3.40.50.10800:FF:000001">
    <property type="entry name" value="Quinolinate synthase A"/>
    <property type="match status" value="1"/>
</dbReference>
<dbReference type="Gene3D" id="3.40.50.10800">
    <property type="entry name" value="NadA-like"/>
    <property type="match status" value="3"/>
</dbReference>
<dbReference type="HAMAP" id="MF_00569">
    <property type="entry name" value="NadA_type3"/>
    <property type="match status" value="1"/>
</dbReference>
<dbReference type="InterPro" id="IPR003473">
    <property type="entry name" value="NadA"/>
</dbReference>
<dbReference type="InterPro" id="IPR036094">
    <property type="entry name" value="NadA_sf"/>
</dbReference>
<dbReference type="InterPro" id="IPR023515">
    <property type="entry name" value="Quinolinate_synth_A_type3"/>
</dbReference>
<dbReference type="NCBIfam" id="TIGR00550">
    <property type="entry name" value="nadA"/>
    <property type="match status" value="1"/>
</dbReference>
<dbReference type="NCBIfam" id="NF006880">
    <property type="entry name" value="PRK09375.2-1"/>
    <property type="match status" value="1"/>
</dbReference>
<dbReference type="NCBIfam" id="NF006883">
    <property type="entry name" value="PRK09375.2-4"/>
    <property type="match status" value="1"/>
</dbReference>
<dbReference type="PANTHER" id="PTHR30573:SF0">
    <property type="entry name" value="QUINOLINATE SYNTHASE, CHLOROPLASTIC"/>
    <property type="match status" value="1"/>
</dbReference>
<dbReference type="PANTHER" id="PTHR30573">
    <property type="entry name" value="QUINOLINATE SYNTHETASE A"/>
    <property type="match status" value="1"/>
</dbReference>
<dbReference type="Pfam" id="PF02445">
    <property type="entry name" value="NadA"/>
    <property type="match status" value="1"/>
</dbReference>
<dbReference type="SUPFAM" id="SSF142754">
    <property type="entry name" value="NadA-like"/>
    <property type="match status" value="1"/>
</dbReference>
<accession>Q65GN4</accession>
<accession>Q62S42</accession>
<evidence type="ECO:0000255" key="1">
    <source>
        <dbReference type="HAMAP-Rule" id="MF_00569"/>
    </source>
</evidence>
<proteinExistence type="inferred from homology"/>